<evidence type="ECO:0000256" key="1">
    <source>
        <dbReference type="SAM" id="MobiDB-lite"/>
    </source>
</evidence>
<evidence type="ECO:0000305" key="2"/>
<keyword id="KW-1185">Reference proteome</keyword>
<protein>
    <recommendedName>
        <fullName>Uncharacterized protein D129L</fullName>
        <shortName>pD129L</shortName>
    </recommendedName>
</protein>
<accession>Q89445</accession>
<dbReference type="EMBL" id="L10061">
    <property type="protein sequence ID" value="AAA42694.1"/>
    <property type="molecule type" value="Genomic_DNA"/>
</dbReference>
<dbReference type="EMBL" id="U18466">
    <property type="protein sequence ID" value="AAA65332.1"/>
    <property type="molecule type" value="Genomic_DNA"/>
</dbReference>
<dbReference type="PIR" id="JT0666">
    <property type="entry name" value="JT0666"/>
</dbReference>
<dbReference type="RefSeq" id="NP_042796.1">
    <property type="nucleotide sequence ID" value="NC_001659.2"/>
</dbReference>
<dbReference type="GeneID" id="22220332"/>
<dbReference type="KEGG" id="vg:22220332"/>
<dbReference type="Proteomes" id="UP000000624">
    <property type="component" value="Segment"/>
</dbReference>
<sequence>MDINPLLYLQAFNNDATTFNTQGHILEQQSDSPYFDTFANAMQAYLDTKQGGNDEEGTIILMDDEDFNDSESLEDFLQMLSEEELNDGFSSDDEPEEHVILTEDNQGEPSETPQATFDITEFIKIDDED</sequence>
<comment type="similarity">
    <text evidence="2">Belongs to the asfivirus D129L family.</text>
</comment>
<proteinExistence type="inferred from homology"/>
<name>VFD29_ASFB7</name>
<gene>
    <name type="ordered locus">Ba71V-103</name>
    <name type="ORF">D129L</name>
</gene>
<organism>
    <name type="scientific">African swine fever virus (strain Badajoz 1971 Vero-adapted)</name>
    <name type="common">Ba71V</name>
    <name type="synonym">ASFV</name>
    <dbReference type="NCBI Taxonomy" id="10498"/>
    <lineage>
        <taxon>Viruses</taxon>
        <taxon>Varidnaviria</taxon>
        <taxon>Bamfordvirae</taxon>
        <taxon>Nucleocytoviricota</taxon>
        <taxon>Pokkesviricetes</taxon>
        <taxon>Asfuvirales</taxon>
        <taxon>Asfarviridae</taxon>
        <taxon>Asfivirus</taxon>
        <taxon>African swine fever virus</taxon>
    </lineage>
</organism>
<organismHost>
    <name type="scientific">Ornithodoros</name>
    <name type="common">relapsing fever ticks</name>
    <dbReference type="NCBI Taxonomy" id="6937"/>
</organismHost>
<organismHost>
    <name type="scientific">Sus scrofa</name>
    <name type="common">Pig</name>
    <dbReference type="NCBI Taxonomy" id="9823"/>
</organismHost>
<feature type="chain" id="PRO_0000373756" description="Uncharacterized protein D129L">
    <location>
        <begin position="1"/>
        <end position="129"/>
    </location>
</feature>
<feature type="region of interest" description="Disordered" evidence="1">
    <location>
        <begin position="86"/>
        <end position="116"/>
    </location>
</feature>
<feature type="compositionally biased region" description="Acidic residues" evidence="1">
    <location>
        <begin position="86"/>
        <end position="96"/>
    </location>
</feature>
<feature type="compositionally biased region" description="Polar residues" evidence="1">
    <location>
        <begin position="103"/>
        <end position="116"/>
    </location>
</feature>
<reference key="1">
    <citation type="journal article" date="1993" name="Gene">
        <title>Two putative African swine fever virus helicases similar to yeast 'DEAH' pre-mRNA processing proteins and vaccinia virus ATPases D11L and D6R.</title>
        <authorList>
            <person name="Yanez R.J."/>
            <person name="Rodriguez J.M."/>
            <person name="Boursnell M.E."/>
            <person name="Rodriguez J.F."/>
            <person name="Vinuela E."/>
        </authorList>
    </citation>
    <scope>NUCLEOTIDE SEQUENCE [GENOMIC DNA]</scope>
</reference>
<reference key="2">
    <citation type="journal article" date="1995" name="Virology">
        <title>Analysis of the complete nucleotide sequence of African swine fever virus.</title>
        <authorList>
            <person name="Yanez R.J."/>
            <person name="Rodriguez J.M."/>
            <person name="Nogal M.L."/>
            <person name="Yuste L."/>
            <person name="Enriquez C."/>
            <person name="Rodriguez J.F."/>
            <person name="Vinuela E."/>
        </authorList>
    </citation>
    <scope>NUCLEOTIDE SEQUENCE [LARGE SCALE GENOMIC DNA]</scope>
</reference>